<comment type="function">
    <text evidence="1">Non-catalytic subunit of AMP-activated protein kinase (AMPK), an energy sensor protein kinase that plays a key role in regulating cellular energy metabolism. In response to reduction of intracellular ATP levels, AMPK activates energy-producing pathways and inhibits energy-consuming processes: inhibits protein, carbohydrate and lipid biosynthesis, as well as cell growth and proliferation. AMPK acts via direct phosphorylation of metabolic enzymes, and by longer-term effects via phosphorylation of transcription regulators. Also acts as a regulator of cellular polarity by remodeling the actin cytoskeleton; probably by indirectly activating myosin. Beta non-catalytic subunit acts as a scaffold on which the AMPK complex assembles, via its C-terminus that bridges alpha (PRKAA1 or PRKAA2) and gamma subunits (PRKAG1, PRKAG2 or PRKAG3) (By similarity).</text>
</comment>
<comment type="subunit">
    <text evidence="1">AMPK is a heterotrimer of an alpha catalytic subunit (PRKAA1 or PRKAA2), a beta (PRKAB1 or PRKAB2) and a gamma non-catalytic subunits (PRKAG1, PRKAG2 or PRKAG3).</text>
</comment>
<comment type="PTM">
    <text evidence="5">Phosphorylated when associated with the catalytic subunit (PRKAA1 or PRKAA2). Phosphorylated by ULK1 and ULK2; leading to negatively regulate AMPK activity and suggesting the existence of a regulatory feedback loop between ULK1, ULK2 and AMPK.</text>
</comment>
<comment type="similarity">
    <text evidence="6">Belongs to the 5'-AMP-activated protein kinase beta subunit family.</text>
</comment>
<gene>
    <name type="primary">Prkab2</name>
</gene>
<sequence length="271" mass="30209">MGNTTSERVSGERHGAKAARAEGGGHGPGKEHKIMVGSTDDPSVFSLPDSKLPGDKEFVPWQQDLDDSVKPAQQARPTVIRWSEGGKEVFISGSFNNWSTKIPLIKSHNDFVAILDLPEGEHQYKFFVDGQWVHDPSEPVVTSQLGTINNLIHVKKSDFEVFDALKLDSMESSETSCRDLSSSPPGPYGQEMYVFRSEERFKSPPILPPHLLQVILNKDTNISCDPALLPEPNHVMLNHLYALSIKDSVMVLSATHRYKKKYVTTLLYKPI</sequence>
<keyword id="KW-0275">Fatty acid biosynthesis</keyword>
<keyword id="KW-0276">Fatty acid metabolism</keyword>
<keyword id="KW-0444">Lipid biosynthesis</keyword>
<keyword id="KW-0443">Lipid metabolism</keyword>
<keyword id="KW-0597">Phosphoprotein</keyword>
<keyword id="KW-1185">Reference proteome</keyword>
<reference key="1">
    <citation type="journal article" date="2004" name="Genome Res.">
        <title>The status, quality, and expansion of the NIH full-length cDNA project: the Mammalian Gene Collection (MGC).</title>
        <authorList>
            <consortium name="The MGC Project Team"/>
        </authorList>
    </citation>
    <scope>NUCLEOTIDE SEQUENCE [LARGE SCALE MRNA]</scope>
    <source>
        <strain>C57BL/6J</strain>
        <tissue>Brain</tissue>
    </source>
</reference>
<reference key="2">
    <citation type="journal article" date="2010" name="Cell">
        <title>A tissue-specific atlas of mouse protein phosphorylation and expression.</title>
        <authorList>
            <person name="Huttlin E.L."/>
            <person name="Jedrychowski M.P."/>
            <person name="Elias J.E."/>
            <person name="Goswami T."/>
            <person name="Rad R."/>
            <person name="Beausoleil S.A."/>
            <person name="Villen J."/>
            <person name="Haas W."/>
            <person name="Sowa M.E."/>
            <person name="Gygi S.P."/>
        </authorList>
    </citation>
    <scope>PHOSPHORYLATION [LARGE SCALE ANALYSIS] AT SER-107</scope>
    <scope>IDENTIFICATION BY MASS SPECTROMETRY [LARGE SCALE ANALYSIS]</scope>
    <source>
        <tissue>Brain</tissue>
        <tissue>Brown adipose tissue</tissue>
        <tissue>Heart</tissue>
        <tissue>Kidney</tissue>
        <tissue>Liver</tissue>
        <tissue>Lung</tissue>
        <tissue>Pancreas</tissue>
        <tissue>Testis</tissue>
    </source>
</reference>
<reference key="3">
    <citation type="journal article" date="2011" name="Autophagy">
        <title>Ulk1-mediated phosphorylation of AMPK constitutes a negative regulatory feedback loop.</title>
        <authorList>
            <person name="Loffler A.S."/>
            <person name="Alers S."/>
            <person name="Dieterle A.M."/>
            <person name="Keppeler H."/>
            <person name="Franz-Wachtel M."/>
            <person name="Kundu M."/>
            <person name="Campbell D.G."/>
            <person name="Wesselborg S."/>
            <person name="Alessi D.R."/>
            <person name="Stork B."/>
        </authorList>
    </citation>
    <scope>PHOSPHORYLATION BY ULK1 AND ULK2</scope>
</reference>
<proteinExistence type="evidence at protein level"/>
<dbReference type="EMBL" id="BC060228">
    <property type="protein sequence ID" value="AAH60228.1"/>
    <property type="molecule type" value="mRNA"/>
</dbReference>
<dbReference type="CCDS" id="CCDS17657.1"/>
<dbReference type="RefSeq" id="NP_892042.2">
    <property type="nucleotide sequence ID" value="NM_182997.2"/>
</dbReference>
<dbReference type="RefSeq" id="XP_006500903.1">
    <property type="nucleotide sequence ID" value="XM_006500840.3"/>
</dbReference>
<dbReference type="RefSeq" id="XP_011238284.1">
    <property type="nucleotide sequence ID" value="XM_011239982.4"/>
</dbReference>
<dbReference type="BMRB" id="Q6PAM0"/>
<dbReference type="SMR" id="Q6PAM0"/>
<dbReference type="BioGRID" id="223830">
    <property type="interactions" value="2"/>
</dbReference>
<dbReference type="ComplexPortal" id="CPX-5851">
    <property type="entry name" value="AMPK complex, alpha2-beta2-gamma1 variant"/>
</dbReference>
<dbReference type="ComplexPortal" id="CPX-5853">
    <property type="entry name" value="AMPK complex, alpha1-beta2-gamma1 variant"/>
</dbReference>
<dbReference type="ComplexPortal" id="CPX-5854">
    <property type="entry name" value="AMPK complex, alpha2-beta2-gamma3 variant"/>
</dbReference>
<dbReference type="ComplexPortal" id="CPX-5855">
    <property type="entry name" value="AMPK complex, alpha1-beta2-gamma3 variant"/>
</dbReference>
<dbReference type="ComplexPortal" id="CPX-5859">
    <property type="entry name" value="AMPK complex, alpha2-beta2-gamma2 variant"/>
</dbReference>
<dbReference type="ComplexPortal" id="CPX-5860">
    <property type="entry name" value="AMPK complex, alpha1-beta2-gamma2 variant"/>
</dbReference>
<dbReference type="CORUM" id="Q6PAM0"/>
<dbReference type="FunCoup" id="Q6PAM0">
    <property type="interactions" value="1631"/>
</dbReference>
<dbReference type="STRING" id="10090.ENSMUSP00000036410"/>
<dbReference type="BindingDB" id="Q6PAM0"/>
<dbReference type="ChEMBL" id="CHEMBL3708161"/>
<dbReference type="CAZy" id="CBM48">
    <property type="family name" value="Carbohydrate-Binding Module Family 48"/>
</dbReference>
<dbReference type="GlyGen" id="Q6PAM0">
    <property type="glycosylation" value="2 sites, 1 N-linked glycan (1 site), 1 O-linked glycan (1 site)"/>
</dbReference>
<dbReference type="iPTMnet" id="Q6PAM0"/>
<dbReference type="PhosphoSitePlus" id="Q6PAM0"/>
<dbReference type="SwissPalm" id="Q6PAM0"/>
<dbReference type="jPOST" id="Q6PAM0"/>
<dbReference type="PaxDb" id="10090-ENSMUSP00000036410"/>
<dbReference type="PeptideAtlas" id="Q6PAM0"/>
<dbReference type="ProteomicsDB" id="296464"/>
<dbReference type="Pumba" id="Q6PAM0"/>
<dbReference type="Antibodypedia" id="33978">
    <property type="antibodies" value="309 antibodies from 34 providers"/>
</dbReference>
<dbReference type="DNASU" id="108097"/>
<dbReference type="Ensembl" id="ENSMUST00000045743.13">
    <property type="protein sequence ID" value="ENSMUSP00000036410.7"/>
    <property type="gene ID" value="ENSMUSG00000038205.13"/>
</dbReference>
<dbReference type="GeneID" id="108097"/>
<dbReference type="KEGG" id="mmu:108097"/>
<dbReference type="UCSC" id="uc008qpb.1">
    <property type="organism name" value="mouse"/>
</dbReference>
<dbReference type="AGR" id="MGI:1336185"/>
<dbReference type="CTD" id="5565"/>
<dbReference type="MGI" id="MGI:1336185">
    <property type="gene designation" value="Prkab2"/>
</dbReference>
<dbReference type="VEuPathDB" id="HostDB:ENSMUSG00000038205"/>
<dbReference type="eggNOG" id="KOG1616">
    <property type="taxonomic scope" value="Eukaryota"/>
</dbReference>
<dbReference type="GeneTree" id="ENSGT00940000159284"/>
<dbReference type="HOGENOM" id="CLU_070949_2_0_1"/>
<dbReference type="InParanoid" id="Q6PAM0"/>
<dbReference type="OMA" id="HEYKFMV"/>
<dbReference type="OrthoDB" id="531008at2759"/>
<dbReference type="PhylomeDB" id="Q6PAM0"/>
<dbReference type="TreeFam" id="TF313827"/>
<dbReference type="Reactome" id="R-MMU-1632852">
    <property type="pathway name" value="Macroautophagy"/>
</dbReference>
<dbReference type="Reactome" id="R-MMU-163680">
    <property type="pathway name" value="AMPK inhibits chREBP transcriptional activation activity"/>
</dbReference>
<dbReference type="Reactome" id="R-MMU-200425">
    <property type="pathway name" value="Carnitine shuttle"/>
</dbReference>
<dbReference type="Reactome" id="R-MMU-380972">
    <property type="pathway name" value="Energy dependent regulation of mTOR by LKB1-AMPK"/>
</dbReference>
<dbReference type="Reactome" id="R-MMU-5628897">
    <property type="pathway name" value="TP53 Regulates Metabolic Genes"/>
</dbReference>
<dbReference type="Reactome" id="R-MMU-6804756">
    <property type="pathway name" value="Regulation of TP53 Activity through Phosphorylation"/>
</dbReference>
<dbReference type="BioGRID-ORCS" id="108097">
    <property type="hits" value="1 hit in 82 CRISPR screens"/>
</dbReference>
<dbReference type="ChiTaRS" id="Prkab2">
    <property type="organism name" value="mouse"/>
</dbReference>
<dbReference type="PRO" id="PR:Q6PAM0"/>
<dbReference type="Proteomes" id="UP000000589">
    <property type="component" value="Chromosome 3"/>
</dbReference>
<dbReference type="RNAct" id="Q6PAM0">
    <property type="molecule type" value="protein"/>
</dbReference>
<dbReference type="Bgee" id="ENSMUSG00000038205">
    <property type="expression patterns" value="Expressed in epithelium of lens and 225 other cell types or tissues"/>
</dbReference>
<dbReference type="ExpressionAtlas" id="Q6PAM0">
    <property type="expression patterns" value="baseline and differential"/>
</dbReference>
<dbReference type="GO" id="GO:0005829">
    <property type="term" value="C:cytosol"/>
    <property type="evidence" value="ECO:0000304"/>
    <property type="project" value="Reactome"/>
</dbReference>
<dbReference type="GO" id="GO:0005654">
    <property type="term" value="C:nucleoplasm"/>
    <property type="evidence" value="ECO:0000304"/>
    <property type="project" value="Reactome"/>
</dbReference>
<dbReference type="GO" id="GO:0031588">
    <property type="term" value="C:nucleotide-activated protein kinase complex"/>
    <property type="evidence" value="ECO:0000250"/>
    <property type="project" value="UniProtKB"/>
</dbReference>
<dbReference type="GO" id="GO:0004679">
    <property type="term" value="F:AMP-activated protein kinase activity"/>
    <property type="evidence" value="ECO:0000304"/>
    <property type="project" value="MGI"/>
</dbReference>
<dbReference type="GO" id="GO:0031669">
    <property type="term" value="P:cellular response to nutrient levels"/>
    <property type="evidence" value="ECO:0000266"/>
    <property type="project" value="ComplexPortal"/>
</dbReference>
<dbReference type="GO" id="GO:0006633">
    <property type="term" value="P:fatty acid biosynthetic process"/>
    <property type="evidence" value="ECO:0007669"/>
    <property type="project" value="UniProtKB-KW"/>
</dbReference>
<dbReference type="GO" id="GO:0120162">
    <property type="term" value="P:positive regulation of cold-induced thermogenesis"/>
    <property type="evidence" value="ECO:0000316"/>
    <property type="project" value="YuBioLab"/>
</dbReference>
<dbReference type="CDD" id="cd02859">
    <property type="entry name" value="E_set_AMPKbeta_like_N"/>
    <property type="match status" value="1"/>
</dbReference>
<dbReference type="FunFam" id="2.60.40.10:FF:000139">
    <property type="entry name" value="Protein kinase AMP-activated non-catalytic subunit beta 1"/>
    <property type="match status" value="1"/>
</dbReference>
<dbReference type="Gene3D" id="6.20.250.60">
    <property type="match status" value="1"/>
</dbReference>
<dbReference type="Gene3D" id="2.60.40.10">
    <property type="entry name" value="Immunoglobulins"/>
    <property type="match status" value="1"/>
</dbReference>
<dbReference type="InterPro" id="IPR032640">
    <property type="entry name" value="AMPK1_CBM"/>
</dbReference>
<dbReference type="InterPro" id="IPR006828">
    <property type="entry name" value="ASC_dom"/>
</dbReference>
<dbReference type="InterPro" id="IPR037256">
    <property type="entry name" value="ASC_dom_sf"/>
</dbReference>
<dbReference type="InterPro" id="IPR050827">
    <property type="entry name" value="CRP1_MDG1_kinase"/>
</dbReference>
<dbReference type="InterPro" id="IPR013783">
    <property type="entry name" value="Ig-like_fold"/>
</dbReference>
<dbReference type="InterPro" id="IPR014756">
    <property type="entry name" value="Ig_E-set"/>
</dbReference>
<dbReference type="PANTHER" id="PTHR10343">
    <property type="entry name" value="5'-AMP-ACTIVATED PROTEIN KINASE , BETA SUBUNIT"/>
    <property type="match status" value="1"/>
</dbReference>
<dbReference type="PANTHER" id="PTHR10343:SF92">
    <property type="entry name" value="5'-AMP-ACTIVATED PROTEIN KINASE SUBUNIT BETA-2"/>
    <property type="match status" value="1"/>
</dbReference>
<dbReference type="Pfam" id="PF16561">
    <property type="entry name" value="AMPK1_CBM"/>
    <property type="match status" value="1"/>
</dbReference>
<dbReference type="Pfam" id="PF04739">
    <property type="entry name" value="AMPKBI"/>
    <property type="match status" value="1"/>
</dbReference>
<dbReference type="SMART" id="SM01010">
    <property type="entry name" value="AMPKBI"/>
    <property type="match status" value="1"/>
</dbReference>
<dbReference type="SUPFAM" id="SSF160219">
    <property type="entry name" value="AMPKBI-like"/>
    <property type="match status" value="1"/>
</dbReference>
<dbReference type="SUPFAM" id="SSF81296">
    <property type="entry name" value="E set domains"/>
    <property type="match status" value="1"/>
</dbReference>
<protein>
    <recommendedName>
        <fullName>5'-AMP-activated protein kinase subunit beta-2</fullName>
        <shortName>AMPK subunit beta-2</shortName>
    </recommendedName>
</protein>
<accession>Q6PAM0</accession>
<name>AAKB2_MOUSE</name>
<feature type="chain" id="PRO_0000204369" description="5'-AMP-activated protein kinase subunit beta-2">
    <location>
        <begin position="1"/>
        <end position="271"/>
    </location>
</feature>
<feature type="region of interest" description="Disordered" evidence="4">
    <location>
        <begin position="1"/>
        <end position="46"/>
    </location>
</feature>
<feature type="modified residue" description="Phosphoserine; by ULK1" evidence="3">
    <location>
        <position position="38"/>
    </location>
</feature>
<feature type="modified residue" description="Phosphothreonine; by ULK1" evidence="3">
    <location>
        <position position="39"/>
    </location>
</feature>
<feature type="modified residue" description="Phosphoserine; by ULK1" evidence="3">
    <location>
        <position position="68"/>
    </location>
</feature>
<feature type="modified residue" description="Phosphoserine" evidence="2">
    <location>
        <position position="94"/>
    </location>
</feature>
<feature type="modified residue" description="Phosphoserine" evidence="7">
    <location>
        <position position="107"/>
    </location>
</feature>
<feature type="modified residue" description="Phosphothreonine" evidence="2">
    <location>
        <position position="147"/>
    </location>
</feature>
<feature type="modified residue" description="Phosphoserine" evidence="2">
    <location>
        <position position="157"/>
    </location>
</feature>
<feature type="modified residue" description="Phosphoserine" evidence="2">
    <location>
        <position position="169"/>
    </location>
</feature>
<feature type="modified residue" description="Phosphoserine" evidence="3">
    <location>
        <position position="173"/>
    </location>
</feature>
<feature type="modified residue" description="Phosphoserine" evidence="2">
    <location>
        <position position="183"/>
    </location>
</feature>
<organism>
    <name type="scientific">Mus musculus</name>
    <name type="common">Mouse</name>
    <dbReference type="NCBI Taxonomy" id="10090"/>
    <lineage>
        <taxon>Eukaryota</taxon>
        <taxon>Metazoa</taxon>
        <taxon>Chordata</taxon>
        <taxon>Craniata</taxon>
        <taxon>Vertebrata</taxon>
        <taxon>Euteleostomi</taxon>
        <taxon>Mammalia</taxon>
        <taxon>Eutheria</taxon>
        <taxon>Euarchontoglires</taxon>
        <taxon>Glires</taxon>
        <taxon>Rodentia</taxon>
        <taxon>Myomorpha</taxon>
        <taxon>Muroidea</taxon>
        <taxon>Muridae</taxon>
        <taxon>Murinae</taxon>
        <taxon>Mus</taxon>
        <taxon>Mus</taxon>
    </lineage>
</organism>
<evidence type="ECO:0000250" key="1"/>
<evidence type="ECO:0000250" key="2">
    <source>
        <dbReference type="UniProtKB" id="O43741"/>
    </source>
</evidence>
<evidence type="ECO:0000250" key="3">
    <source>
        <dbReference type="UniProtKB" id="Q9QZH4"/>
    </source>
</evidence>
<evidence type="ECO:0000256" key="4">
    <source>
        <dbReference type="SAM" id="MobiDB-lite"/>
    </source>
</evidence>
<evidence type="ECO:0000269" key="5">
    <source>
    </source>
</evidence>
<evidence type="ECO:0000305" key="6"/>
<evidence type="ECO:0007744" key="7">
    <source>
    </source>
</evidence>